<dbReference type="EMBL" id="CP001364">
    <property type="protein sequence ID" value="ACM53961.1"/>
    <property type="molecule type" value="Genomic_DNA"/>
</dbReference>
<dbReference type="SMR" id="B9LJE5"/>
<dbReference type="KEGG" id="chl:Chy400_2569"/>
<dbReference type="HOGENOM" id="CLU_139869_3_0_0"/>
<dbReference type="OrthoDB" id="9810484at2"/>
<dbReference type="GO" id="GO:0005737">
    <property type="term" value="C:cytoplasm"/>
    <property type="evidence" value="ECO:0007669"/>
    <property type="project" value="UniProtKB-ARBA"/>
</dbReference>
<dbReference type="GO" id="GO:0015935">
    <property type="term" value="C:small ribosomal subunit"/>
    <property type="evidence" value="ECO:0007669"/>
    <property type="project" value="TreeGrafter"/>
</dbReference>
<dbReference type="GO" id="GO:0019843">
    <property type="term" value="F:rRNA binding"/>
    <property type="evidence" value="ECO:0007669"/>
    <property type="project" value="UniProtKB-UniRule"/>
</dbReference>
<dbReference type="GO" id="GO:0003735">
    <property type="term" value="F:structural constituent of ribosome"/>
    <property type="evidence" value="ECO:0007669"/>
    <property type="project" value="InterPro"/>
</dbReference>
<dbReference type="GO" id="GO:0008270">
    <property type="term" value="F:zinc ion binding"/>
    <property type="evidence" value="ECO:0007669"/>
    <property type="project" value="UniProtKB-UniRule"/>
</dbReference>
<dbReference type="GO" id="GO:0006412">
    <property type="term" value="P:translation"/>
    <property type="evidence" value="ECO:0007669"/>
    <property type="project" value="UniProtKB-UniRule"/>
</dbReference>
<dbReference type="FunFam" id="4.10.830.10:FF:000001">
    <property type="entry name" value="30S ribosomal protein S14 type Z"/>
    <property type="match status" value="1"/>
</dbReference>
<dbReference type="Gene3D" id="4.10.830.10">
    <property type="entry name" value="30s Ribosomal Protein S14, Chain N"/>
    <property type="match status" value="1"/>
</dbReference>
<dbReference type="HAMAP" id="MF_01364_B">
    <property type="entry name" value="Ribosomal_uS14_2_B"/>
    <property type="match status" value="1"/>
</dbReference>
<dbReference type="InterPro" id="IPR001209">
    <property type="entry name" value="Ribosomal_uS14"/>
</dbReference>
<dbReference type="InterPro" id="IPR023053">
    <property type="entry name" value="Ribosomal_uS14_bact"/>
</dbReference>
<dbReference type="InterPro" id="IPR018271">
    <property type="entry name" value="Ribosomal_uS14_CS"/>
</dbReference>
<dbReference type="InterPro" id="IPR043140">
    <property type="entry name" value="Ribosomal_uS14_sf"/>
</dbReference>
<dbReference type="NCBIfam" id="NF005974">
    <property type="entry name" value="PRK08061.1"/>
    <property type="match status" value="1"/>
</dbReference>
<dbReference type="PANTHER" id="PTHR19836">
    <property type="entry name" value="30S RIBOSOMAL PROTEIN S14"/>
    <property type="match status" value="1"/>
</dbReference>
<dbReference type="PANTHER" id="PTHR19836:SF19">
    <property type="entry name" value="SMALL RIBOSOMAL SUBUNIT PROTEIN US14M"/>
    <property type="match status" value="1"/>
</dbReference>
<dbReference type="Pfam" id="PF00253">
    <property type="entry name" value="Ribosomal_S14"/>
    <property type="match status" value="1"/>
</dbReference>
<dbReference type="SUPFAM" id="SSF57716">
    <property type="entry name" value="Glucocorticoid receptor-like (DNA-binding domain)"/>
    <property type="match status" value="1"/>
</dbReference>
<dbReference type="PROSITE" id="PS00527">
    <property type="entry name" value="RIBOSOMAL_S14"/>
    <property type="match status" value="1"/>
</dbReference>
<sequence length="61" mass="7144">MAKKSWIVRAQRPPKFSVRAYNRCKICGRSRAYIRKFGMCRICFREHALKGLIPGVVKSSW</sequence>
<accession>B9LJE5</accession>
<proteinExistence type="inferred from homology"/>
<evidence type="ECO:0000255" key="1">
    <source>
        <dbReference type="HAMAP-Rule" id="MF_01364"/>
    </source>
</evidence>
<evidence type="ECO:0000305" key="2"/>
<protein>
    <recommendedName>
        <fullName evidence="1">Small ribosomal subunit protein uS14</fullName>
    </recommendedName>
    <alternativeName>
        <fullName evidence="2">30S ribosomal protein S14 type Z</fullName>
    </alternativeName>
</protein>
<comment type="function">
    <text evidence="1">Binds 16S rRNA, required for the assembly of 30S particles and may also be responsible for determining the conformation of the 16S rRNA at the A site.</text>
</comment>
<comment type="cofactor">
    <cofactor evidence="1">
        <name>Zn(2+)</name>
        <dbReference type="ChEBI" id="CHEBI:29105"/>
    </cofactor>
    <text evidence="1">Binds 1 zinc ion per subunit.</text>
</comment>
<comment type="subunit">
    <text evidence="1">Part of the 30S ribosomal subunit. Contacts proteins S3 and S10.</text>
</comment>
<comment type="similarity">
    <text evidence="1">Belongs to the universal ribosomal protein uS14 family. Zinc-binding uS14 subfamily.</text>
</comment>
<organism>
    <name type="scientific">Chloroflexus aurantiacus (strain ATCC 29364 / DSM 637 / Y-400-fl)</name>
    <dbReference type="NCBI Taxonomy" id="480224"/>
    <lineage>
        <taxon>Bacteria</taxon>
        <taxon>Bacillati</taxon>
        <taxon>Chloroflexota</taxon>
        <taxon>Chloroflexia</taxon>
        <taxon>Chloroflexales</taxon>
        <taxon>Chloroflexineae</taxon>
        <taxon>Chloroflexaceae</taxon>
        <taxon>Chloroflexus</taxon>
    </lineage>
</organism>
<name>RS14Z_CHLSY</name>
<gene>
    <name evidence="1" type="primary">rpsZ</name>
    <name evidence="1" type="synonym">rpsN</name>
    <name type="ordered locus">Chy400_2569</name>
</gene>
<keyword id="KW-0479">Metal-binding</keyword>
<keyword id="KW-0687">Ribonucleoprotein</keyword>
<keyword id="KW-0689">Ribosomal protein</keyword>
<keyword id="KW-0694">RNA-binding</keyword>
<keyword id="KW-0699">rRNA-binding</keyword>
<keyword id="KW-0862">Zinc</keyword>
<feature type="chain" id="PRO_1000166763" description="Small ribosomal subunit protein uS14">
    <location>
        <begin position="1"/>
        <end position="61"/>
    </location>
</feature>
<feature type="binding site" evidence="1">
    <location>
        <position position="24"/>
    </location>
    <ligand>
        <name>Zn(2+)</name>
        <dbReference type="ChEBI" id="CHEBI:29105"/>
    </ligand>
</feature>
<feature type="binding site" evidence="1">
    <location>
        <position position="27"/>
    </location>
    <ligand>
        <name>Zn(2+)</name>
        <dbReference type="ChEBI" id="CHEBI:29105"/>
    </ligand>
</feature>
<feature type="binding site" evidence="1">
    <location>
        <position position="40"/>
    </location>
    <ligand>
        <name>Zn(2+)</name>
        <dbReference type="ChEBI" id="CHEBI:29105"/>
    </ligand>
</feature>
<feature type="binding site" evidence="1">
    <location>
        <position position="43"/>
    </location>
    <ligand>
        <name>Zn(2+)</name>
        <dbReference type="ChEBI" id="CHEBI:29105"/>
    </ligand>
</feature>
<reference key="1">
    <citation type="submission" date="2009-01" db="EMBL/GenBank/DDBJ databases">
        <title>Complete sequence of Chloroflexus sp. Y-400-fl.</title>
        <authorList>
            <consortium name="US DOE Joint Genome Institute"/>
            <person name="Lucas S."/>
            <person name="Copeland A."/>
            <person name="Lapidus A."/>
            <person name="Glavina del Rio T."/>
            <person name="Dalin E."/>
            <person name="Tice H."/>
            <person name="Bruce D."/>
            <person name="Goodwin L."/>
            <person name="Pitluck S."/>
            <person name="Sims D."/>
            <person name="Kiss H."/>
            <person name="Brettin T."/>
            <person name="Detter J.C."/>
            <person name="Han C."/>
            <person name="Larimer F."/>
            <person name="Land M."/>
            <person name="Hauser L."/>
            <person name="Kyrpides N."/>
            <person name="Ovchinnikova G."/>
            <person name="Bryant D.A."/>
            <person name="Richardson P."/>
        </authorList>
    </citation>
    <scope>NUCLEOTIDE SEQUENCE [LARGE SCALE GENOMIC DNA]</scope>
    <source>
        <strain>ATCC 29364 / DSM 637 / Y-400-fl</strain>
    </source>
</reference>